<gene>
    <name evidence="1" type="primary">rpsI</name>
    <name type="ordered locus">MSMEG_1557</name>
    <name type="ordered locus">MSMEI_1520</name>
</gene>
<organism>
    <name type="scientific">Mycolicibacterium smegmatis (strain ATCC 700084 / mc(2)155)</name>
    <name type="common">Mycobacterium smegmatis</name>
    <dbReference type="NCBI Taxonomy" id="246196"/>
    <lineage>
        <taxon>Bacteria</taxon>
        <taxon>Bacillati</taxon>
        <taxon>Actinomycetota</taxon>
        <taxon>Actinomycetes</taxon>
        <taxon>Mycobacteriales</taxon>
        <taxon>Mycobacteriaceae</taxon>
        <taxon>Mycolicibacterium</taxon>
    </lineage>
</organism>
<proteinExistence type="evidence at protein level"/>
<name>RS9_MYCS2</name>
<comment type="similarity">
    <text evidence="1">Belongs to the universal ribosomal protein uS9 family.</text>
</comment>
<feature type="initiator methionine" description="Removed" evidence="2">
    <location>
        <position position="1"/>
    </location>
</feature>
<feature type="chain" id="PRO_1000051259" description="Small ribosomal subunit protein uS9">
    <location>
        <begin position="2"/>
        <end position="150"/>
    </location>
</feature>
<feature type="strand" evidence="4">
    <location>
        <begin position="28"/>
        <end position="31"/>
    </location>
</feature>
<feature type="strand" evidence="5">
    <location>
        <begin position="37"/>
        <end position="46"/>
    </location>
</feature>
<feature type="strand" evidence="5">
    <location>
        <begin position="48"/>
        <end position="53"/>
    </location>
</feature>
<feature type="helix" evidence="5">
    <location>
        <begin position="55"/>
        <end position="58"/>
    </location>
</feature>
<feature type="helix" evidence="5">
    <location>
        <begin position="62"/>
        <end position="75"/>
    </location>
</feature>
<feature type="strand" evidence="5">
    <location>
        <begin position="79"/>
        <end position="87"/>
    </location>
</feature>
<feature type="helix" evidence="5">
    <location>
        <begin position="92"/>
        <end position="110"/>
    </location>
</feature>
<feature type="helix" evidence="4">
    <location>
        <begin position="112"/>
        <end position="114"/>
    </location>
</feature>
<feature type="helix" evidence="5">
    <location>
        <begin position="115"/>
        <end position="121"/>
    </location>
</feature>
<feature type="strand" evidence="4">
    <location>
        <begin position="138"/>
        <end position="140"/>
    </location>
</feature>
<sequence length="150" mass="16765">MTDVTETEVVTESAEPREPVIIDRPIQTVGRRKEAVVRVRLVPGTGQFNLDGRTLENYFPNKVHQQLIKAPLVTVDRVDQFDIYAHLDGGGPSGQAGALRLAIARALILVQPEDRPALKKAGFLTRDPRAIERKKYGLKKARKAPQYSKR</sequence>
<accession>A0QSP9</accession>
<accession>I7FGL4</accession>
<dbReference type="EMBL" id="CP000480">
    <property type="protein sequence ID" value="ABK70660.1"/>
    <property type="molecule type" value="Genomic_DNA"/>
</dbReference>
<dbReference type="EMBL" id="CP001663">
    <property type="protein sequence ID" value="AFP37993.1"/>
    <property type="molecule type" value="Genomic_DNA"/>
</dbReference>
<dbReference type="RefSeq" id="YP_885937.1">
    <property type="nucleotide sequence ID" value="NC_008596.1"/>
</dbReference>
<dbReference type="PDB" id="5O5J">
    <property type="method" value="EM"/>
    <property type="resolution" value="3.45 A"/>
    <property type="chains" value="I=1-150"/>
</dbReference>
<dbReference type="PDB" id="5O61">
    <property type="method" value="EM"/>
    <property type="resolution" value="3.31 A"/>
    <property type="chains" value="BI=1-150"/>
</dbReference>
<dbReference type="PDB" id="5XYU">
    <property type="method" value="EM"/>
    <property type="resolution" value="3.45 A"/>
    <property type="chains" value="I=1-150"/>
</dbReference>
<dbReference type="PDB" id="5ZEB">
    <property type="method" value="EM"/>
    <property type="resolution" value="3.40 A"/>
    <property type="chains" value="i=1-150"/>
</dbReference>
<dbReference type="PDB" id="5ZEP">
    <property type="method" value="EM"/>
    <property type="resolution" value="3.40 A"/>
    <property type="chains" value="i=1-150"/>
</dbReference>
<dbReference type="PDB" id="5ZEU">
    <property type="method" value="EM"/>
    <property type="resolution" value="3.70 A"/>
    <property type="chains" value="i=1-150"/>
</dbReference>
<dbReference type="PDB" id="6DZI">
    <property type="method" value="EM"/>
    <property type="resolution" value="3.46 A"/>
    <property type="chains" value="4=25-150"/>
</dbReference>
<dbReference type="PDB" id="6DZK">
    <property type="method" value="EM"/>
    <property type="resolution" value="3.60 A"/>
    <property type="chains" value="I=1-150"/>
</dbReference>
<dbReference type="PDB" id="8FR8">
    <property type="method" value="EM"/>
    <property type="resolution" value="2.76 A"/>
    <property type="chains" value="k=25-150"/>
</dbReference>
<dbReference type="PDB" id="8V9J">
    <property type="method" value="EM"/>
    <property type="resolution" value="3.10 A"/>
    <property type="chains" value="i=1-150"/>
</dbReference>
<dbReference type="PDB" id="8V9K">
    <property type="method" value="EM"/>
    <property type="resolution" value="3.10 A"/>
    <property type="chains" value="i=1-150"/>
</dbReference>
<dbReference type="PDB" id="8V9L">
    <property type="method" value="EM"/>
    <property type="resolution" value="3.00 A"/>
    <property type="chains" value="i=1-150"/>
</dbReference>
<dbReference type="PDB" id="8VIO">
    <property type="method" value="EM"/>
    <property type="resolution" value="3.26 A"/>
    <property type="chains" value="o=1-150"/>
</dbReference>
<dbReference type="PDB" id="8WHX">
    <property type="method" value="EM"/>
    <property type="resolution" value="2.80 A"/>
    <property type="chains" value="j=1-150"/>
</dbReference>
<dbReference type="PDB" id="8WI7">
    <property type="method" value="EM"/>
    <property type="resolution" value="3.50 A"/>
    <property type="chains" value="j=1-150"/>
</dbReference>
<dbReference type="PDB" id="8WI9">
    <property type="method" value="EM"/>
    <property type="resolution" value="3.50 A"/>
    <property type="chains" value="j=1-150"/>
</dbReference>
<dbReference type="PDB" id="8WIB">
    <property type="method" value="EM"/>
    <property type="resolution" value="3.50 A"/>
    <property type="chains" value="j=1-150"/>
</dbReference>
<dbReference type="PDB" id="8WID">
    <property type="method" value="EM"/>
    <property type="resolution" value="3.50 A"/>
    <property type="chains" value="j=1-150"/>
</dbReference>
<dbReference type="PDB" id="8WIF">
    <property type="method" value="EM"/>
    <property type="resolution" value="2.90 A"/>
    <property type="chains" value="j=1-150"/>
</dbReference>
<dbReference type="PDBsum" id="5O5J"/>
<dbReference type="PDBsum" id="5O61"/>
<dbReference type="PDBsum" id="5XYU"/>
<dbReference type="PDBsum" id="5ZEB"/>
<dbReference type="PDBsum" id="5ZEP"/>
<dbReference type="PDBsum" id="5ZEU"/>
<dbReference type="PDBsum" id="6DZI"/>
<dbReference type="PDBsum" id="6DZK"/>
<dbReference type="PDBsum" id="8FR8"/>
<dbReference type="PDBsum" id="8V9J"/>
<dbReference type="PDBsum" id="8V9K"/>
<dbReference type="PDBsum" id="8V9L"/>
<dbReference type="PDBsum" id="8VIO"/>
<dbReference type="PDBsum" id="8WHX"/>
<dbReference type="PDBsum" id="8WI7"/>
<dbReference type="PDBsum" id="8WI9"/>
<dbReference type="PDBsum" id="8WIB"/>
<dbReference type="PDBsum" id="8WID"/>
<dbReference type="PDBsum" id="8WIF"/>
<dbReference type="EMDB" id="EMD-29397"/>
<dbReference type="EMDB" id="EMD-3748"/>
<dbReference type="EMDB" id="EMD-3751"/>
<dbReference type="EMDB" id="EMD-37551"/>
<dbReference type="EMDB" id="EMD-37559"/>
<dbReference type="EMDB" id="EMD-37561"/>
<dbReference type="EMDB" id="EMD-37562"/>
<dbReference type="EMDB" id="EMD-37564"/>
<dbReference type="EMDB" id="EMD-37565"/>
<dbReference type="EMDB" id="EMD-43074"/>
<dbReference type="EMDB" id="EMD-43075"/>
<dbReference type="EMDB" id="EMD-43076"/>
<dbReference type="EMDB" id="EMD-43267"/>
<dbReference type="EMDB" id="EMD-6790"/>
<dbReference type="EMDB" id="EMD-6920"/>
<dbReference type="EMDB" id="EMD-6921"/>
<dbReference type="EMDB" id="EMD-6923"/>
<dbReference type="EMDB" id="EMD-8932"/>
<dbReference type="EMDB" id="EMD-8934"/>
<dbReference type="SMR" id="A0QSP9"/>
<dbReference type="IntAct" id="A0QSP9">
    <property type="interactions" value="1"/>
</dbReference>
<dbReference type="STRING" id="246196.MSMEG_1557"/>
<dbReference type="PaxDb" id="246196-MSMEI_1520"/>
<dbReference type="KEGG" id="msg:MSMEI_1520"/>
<dbReference type="KEGG" id="msm:MSMEG_1557"/>
<dbReference type="PATRIC" id="fig|246196.19.peg.1543"/>
<dbReference type="eggNOG" id="COG0103">
    <property type="taxonomic scope" value="Bacteria"/>
</dbReference>
<dbReference type="OrthoDB" id="9803965at2"/>
<dbReference type="Proteomes" id="UP000000757">
    <property type="component" value="Chromosome"/>
</dbReference>
<dbReference type="Proteomes" id="UP000006158">
    <property type="component" value="Chromosome"/>
</dbReference>
<dbReference type="GO" id="GO:0005737">
    <property type="term" value="C:cytoplasm"/>
    <property type="evidence" value="ECO:0007669"/>
    <property type="project" value="UniProtKB-ARBA"/>
</dbReference>
<dbReference type="GO" id="GO:0015935">
    <property type="term" value="C:small ribosomal subunit"/>
    <property type="evidence" value="ECO:0007669"/>
    <property type="project" value="TreeGrafter"/>
</dbReference>
<dbReference type="GO" id="GO:0003723">
    <property type="term" value="F:RNA binding"/>
    <property type="evidence" value="ECO:0007669"/>
    <property type="project" value="TreeGrafter"/>
</dbReference>
<dbReference type="GO" id="GO:0003735">
    <property type="term" value="F:structural constituent of ribosome"/>
    <property type="evidence" value="ECO:0007669"/>
    <property type="project" value="InterPro"/>
</dbReference>
<dbReference type="GO" id="GO:0006412">
    <property type="term" value="P:translation"/>
    <property type="evidence" value="ECO:0007669"/>
    <property type="project" value="UniProtKB-UniRule"/>
</dbReference>
<dbReference type="FunFam" id="3.30.230.10:FF:000001">
    <property type="entry name" value="30S ribosomal protein S9"/>
    <property type="match status" value="1"/>
</dbReference>
<dbReference type="Gene3D" id="3.30.230.10">
    <property type="match status" value="1"/>
</dbReference>
<dbReference type="HAMAP" id="MF_00532_B">
    <property type="entry name" value="Ribosomal_uS9_B"/>
    <property type="match status" value="1"/>
</dbReference>
<dbReference type="InterPro" id="IPR020568">
    <property type="entry name" value="Ribosomal_Su5_D2-typ_SF"/>
</dbReference>
<dbReference type="InterPro" id="IPR000754">
    <property type="entry name" value="Ribosomal_uS9"/>
</dbReference>
<dbReference type="InterPro" id="IPR023035">
    <property type="entry name" value="Ribosomal_uS9_bac/plastid"/>
</dbReference>
<dbReference type="InterPro" id="IPR020574">
    <property type="entry name" value="Ribosomal_uS9_CS"/>
</dbReference>
<dbReference type="InterPro" id="IPR014721">
    <property type="entry name" value="Ribsml_uS5_D2-typ_fold_subgr"/>
</dbReference>
<dbReference type="NCBIfam" id="NF001099">
    <property type="entry name" value="PRK00132.1"/>
    <property type="match status" value="1"/>
</dbReference>
<dbReference type="PANTHER" id="PTHR21569">
    <property type="entry name" value="RIBOSOMAL PROTEIN S9"/>
    <property type="match status" value="1"/>
</dbReference>
<dbReference type="PANTHER" id="PTHR21569:SF1">
    <property type="entry name" value="SMALL RIBOSOMAL SUBUNIT PROTEIN US9M"/>
    <property type="match status" value="1"/>
</dbReference>
<dbReference type="Pfam" id="PF00380">
    <property type="entry name" value="Ribosomal_S9"/>
    <property type="match status" value="1"/>
</dbReference>
<dbReference type="SUPFAM" id="SSF54211">
    <property type="entry name" value="Ribosomal protein S5 domain 2-like"/>
    <property type="match status" value="1"/>
</dbReference>
<dbReference type="PROSITE" id="PS00360">
    <property type="entry name" value="RIBOSOMAL_S9"/>
    <property type="match status" value="1"/>
</dbReference>
<reference key="1">
    <citation type="submission" date="2006-10" db="EMBL/GenBank/DDBJ databases">
        <authorList>
            <person name="Fleischmann R.D."/>
            <person name="Dodson R.J."/>
            <person name="Haft D.H."/>
            <person name="Merkel J.S."/>
            <person name="Nelson W.C."/>
            <person name="Fraser C.M."/>
        </authorList>
    </citation>
    <scope>NUCLEOTIDE SEQUENCE [LARGE SCALE GENOMIC DNA]</scope>
    <source>
        <strain>ATCC 700084 / mc(2)155</strain>
    </source>
</reference>
<reference key="2">
    <citation type="journal article" date="2007" name="Genome Biol.">
        <title>Interrupted coding sequences in Mycobacterium smegmatis: authentic mutations or sequencing errors?</title>
        <authorList>
            <person name="Deshayes C."/>
            <person name="Perrodou E."/>
            <person name="Gallien S."/>
            <person name="Euphrasie D."/>
            <person name="Schaeffer C."/>
            <person name="Van-Dorsselaer A."/>
            <person name="Poch O."/>
            <person name="Lecompte O."/>
            <person name="Reyrat J.-M."/>
        </authorList>
    </citation>
    <scope>NUCLEOTIDE SEQUENCE [LARGE SCALE GENOMIC DNA]</scope>
    <source>
        <strain>ATCC 700084 / mc(2)155</strain>
    </source>
</reference>
<reference key="3">
    <citation type="journal article" date="2009" name="Genome Res.">
        <title>Ortho-proteogenomics: multiple proteomes investigation through orthology and a new MS-based protocol.</title>
        <authorList>
            <person name="Gallien S."/>
            <person name="Perrodou E."/>
            <person name="Carapito C."/>
            <person name="Deshayes C."/>
            <person name="Reyrat J.-M."/>
            <person name="Van Dorsselaer A."/>
            <person name="Poch O."/>
            <person name="Schaeffer C."/>
            <person name="Lecompte O."/>
        </authorList>
    </citation>
    <scope>NUCLEOTIDE SEQUENCE [LARGE SCALE GENOMIC DNA]</scope>
    <scope>IDENTIFICATION BY MASS SPECTROMETRY [LARGE SCALE ANALYSIS]</scope>
    <scope>CLEAVAGE OF INITIATOR METHIONINE</scope>
    <source>
        <strain>ATCC 700084 / mc(2)155</strain>
    </source>
</reference>
<evidence type="ECO:0000255" key="1">
    <source>
        <dbReference type="HAMAP-Rule" id="MF_00532"/>
    </source>
</evidence>
<evidence type="ECO:0000269" key="2">
    <source>
    </source>
</evidence>
<evidence type="ECO:0000305" key="3"/>
<evidence type="ECO:0007829" key="4">
    <source>
        <dbReference type="PDB" id="5O5J"/>
    </source>
</evidence>
<evidence type="ECO:0007829" key="5">
    <source>
        <dbReference type="PDB" id="5XYU"/>
    </source>
</evidence>
<protein>
    <recommendedName>
        <fullName evidence="1">Small ribosomal subunit protein uS9</fullName>
    </recommendedName>
    <alternativeName>
        <fullName evidence="3">30S ribosomal protein S9</fullName>
    </alternativeName>
</protein>
<keyword id="KW-0002">3D-structure</keyword>
<keyword id="KW-1185">Reference proteome</keyword>
<keyword id="KW-0687">Ribonucleoprotein</keyword>
<keyword id="KW-0689">Ribosomal protein</keyword>